<keyword id="KW-0007">Acetylation</keyword>
<keyword id="KW-0025">Alternative splicing</keyword>
<keyword id="KW-0963">Cytoplasm</keyword>
<keyword id="KW-0333">Golgi apparatus</keyword>
<keyword id="KW-0597">Phosphoprotein</keyword>
<keyword id="KW-1185">Reference proteome</keyword>
<keyword id="KW-0677">Repeat</keyword>
<keyword id="KW-0833">Ubl conjugation pathway</keyword>
<keyword id="KW-0853">WD repeat</keyword>
<sequence length="598" mass="67956">MDDHNLEEFRRHWQEELAQSQALRRRRRLEAGERRSPRRPEAGARGEPASGYLGLAQGLLEGAGRPPAPRPGRGGDRKDTSSRSRSPPDRDATEPEPLVDQLIRDLNELDDVPFFDVRLPYELAINIFQYLNRRELGLCAQVSKTWKVIAEDEVLWYRLCRQEGHLPHSRFSDYTCWKLILQECLAKEHTLRANWKNRKGAVSELEHVPDAVLCDVRSHDGVVIAGYTSGDVRVWDTRTWDYVAPFLESESEEEDPGMQPYVSFVRINSSLAVAAYEDGILNIWDLRTGRFPIFRFEHDARIQALALSQEKPIVATASAFDVVMLYPNEEGHWHVASEFEVQKLVDYLEIVPNTGRYPVAIATAGDLVYLLKADDSARTLHYVYGQPATCLDVSASQVAFGVKSLGWVYEGNKILVYSLEAERCLSKLGNALGDFTCVNIRDSPPNLMVSGNMDRRVRIHDLRSDKIALSLSAHQLGVSAVQMDDWKVVSGGEEGLVSVWDYRMNQKLWEVHSRHPVRYLSFNSHSLITANVPYEKVLRNSDLDNFACHRRHRGLIHAYEFAVDQLAFQSPLPVCRLPRDIMAGYSYDLALSFPHDSI</sequence>
<gene>
    <name type="primary">Fbxw8</name>
</gene>
<organism>
    <name type="scientific">Mus musculus</name>
    <name type="common">Mouse</name>
    <dbReference type="NCBI Taxonomy" id="10090"/>
    <lineage>
        <taxon>Eukaryota</taxon>
        <taxon>Metazoa</taxon>
        <taxon>Chordata</taxon>
        <taxon>Craniata</taxon>
        <taxon>Vertebrata</taxon>
        <taxon>Euteleostomi</taxon>
        <taxon>Mammalia</taxon>
        <taxon>Eutheria</taxon>
        <taxon>Euarchontoglires</taxon>
        <taxon>Glires</taxon>
        <taxon>Rodentia</taxon>
        <taxon>Myomorpha</taxon>
        <taxon>Muroidea</taxon>
        <taxon>Muridae</taxon>
        <taxon>Murinae</taxon>
        <taxon>Mus</taxon>
        <taxon>Mus</taxon>
    </lineage>
</organism>
<protein>
    <recommendedName>
        <fullName>F-box/WD repeat-containing protein 8</fullName>
    </recommendedName>
    <alternativeName>
        <fullName>F-box and WD-40 domain-containing protein 8</fullName>
    </alternativeName>
</protein>
<comment type="function">
    <text evidence="2 7 8">Substrate-recognition component of the Cul7-RING(FBXW8) ubiquitin ligase complex, which mediates the ubiquitination and subsequent proteasomal degradation of target proteins (By similarity). The Cul7-RING(FBXW8) complex mediates ubiquitination and consequent degradation of GORASP1, acting as a component of the ubiquitin ligase pathway that regulates Golgi morphogenesis and dendrite patterning in brain (By similarity). Mediates ubiquitination and degradation of IRS1 in a mTOR-dependent manner: the Cul7-RING(FBXW8) complex recognizes and binds IRS1 previously phosphorylated by S6 kinase (RPS6KB1 or RPS6KB2) (PubMed:23142081). The Cul7-RING(FBXW8) complex also mediates ubiquitination of MAP4K1/HPK1: recognizes and binds autophosphorylated MAP4K1/HPK1, leading to its degradation, thereby affecting cell proliferation and differentiation (By similarity). The Cul7-RING(FBXW8) complex also mediates ubiquitination of phosphorylated cyclin-D1 (CCND1) (By similarity). The Cul7-RING(FBXW8) complex is however not a major regulator of CCND1 stability during the G1/S transition (PubMed:22124152). Associated component of the 3M complex, suggesting that it mediates some of 3M complex functions (By similarity).</text>
</comment>
<comment type="pathway">
    <text evidence="8">Protein modification; protein ubiquitination.</text>
</comment>
<comment type="subunit">
    <text evidence="2 5 9">Component of the Cul7-RING(FBXW8) complex consisting of CUL7, RBX1, SKP1 and FBXW8; within the complex interacts with CUL7 and SKP1 (By similarity) (PubMed:16880526). Interacts with GLMN isoform 1 (By similarity). Interacts with OBSL1, CUL1, CUL2, CCT6B, PFDN5, CCT2, CCT3, CCT6A, CCT7, VBP1, CCDC8, ARF1, TRIP13, PDCD5 and GORASP1 (By similarity). Interacts with MAP4K1/HPK1 (when autophosphorylated) (By similarity). Associated component of the 3M complex (By similarity). Interacts with POUF51 (when phosphorylated on 'Ser-347') (PubMed:29153991).</text>
</comment>
<comment type="subcellular location">
    <subcellularLocation>
        <location evidence="1">Cytoplasm</location>
        <location evidence="1">Perinuclear region</location>
    </subcellularLocation>
    <subcellularLocation>
        <location evidence="1">Golgi apparatus</location>
    </subcellularLocation>
    <subcellularLocation>
        <location evidence="8">Cytoplasm</location>
        <location evidence="8">Cytosol</location>
    </subcellularLocation>
    <text evidence="8">Localizes to the cytosol when phosphorylated at Ser-86, promoting IRS1 ubiquitination.</text>
</comment>
<comment type="alternative products">
    <event type="alternative splicing"/>
    <isoform>
        <id>Q8BIA4-1</id>
        <name>1</name>
        <sequence type="displayed"/>
    </isoform>
    <isoform>
        <id>Q8BIA4-4</id>
        <name>2</name>
        <sequence type="described" ref="VSP_008502"/>
    </isoform>
</comment>
<comment type="tissue specificity">
    <text evidence="6">Widely expressed. Expressed at higher level in skeletal muscle, cartilage and lung.</text>
</comment>
<comment type="PTM">
    <text evidence="8">Phosphorylation at Ser-86 by mTORC2 promotes FBXW8 stabilization, allowing its translocation to the cytosol in response to insulin.</text>
</comment>
<comment type="disruption phenotype">
    <text evidence="5 6">Reduced embryo size and neonatal lethality (PubMed:16880526, PubMed:17998335). Embryos and placentas are smaller and only a third of the expected number of mice survived birth (PubMed:16880526, PubMed:17998335). Mice that survive remain smaller throughout postnatal development (PubMed:17998335).</text>
</comment>
<accession>Q8BIA4</accession>
<accession>Q8BI62</accession>
<accession>Q8BI75</accession>
<accession>Q8BI76</accession>
<accession>Q8CID8</accession>
<accession>Q921Z1</accession>
<dbReference type="EMBL" id="AK034447">
    <property type="protein sequence ID" value="BAC28712.1"/>
    <property type="molecule type" value="mRNA"/>
</dbReference>
<dbReference type="EMBL" id="AK047695">
    <property type="protein sequence ID" value="BAC33128.1"/>
    <property type="molecule type" value="mRNA"/>
</dbReference>
<dbReference type="EMBL" id="AK047756">
    <property type="protein sequence ID" value="BAC33147.1"/>
    <property type="molecule type" value="mRNA"/>
</dbReference>
<dbReference type="EMBL" id="AK053794">
    <property type="protein sequence ID" value="BAC35527.1"/>
    <property type="molecule type" value="mRNA"/>
</dbReference>
<dbReference type="EMBL" id="BC009095">
    <property type="protein sequence ID" value="AAH09095.2"/>
    <property type="molecule type" value="mRNA"/>
</dbReference>
<dbReference type="EMBL" id="BC024091">
    <property type="protein sequence ID" value="AAH24091.1"/>
    <property type="molecule type" value="mRNA"/>
</dbReference>
<dbReference type="CCDS" id="CCDS19609.1">
    <molecule id="Q8BIA4-1"/>
</dbReference>
<dbReference type="RefSeq" id="NP_766309.2">
    <molecule id="Q8BIA4-1"/>
    <property type="nucleotide sequence ID" value="NM_172721.2"/>
</dbReference>
<dbReference type="SMR" id="Q8BIA4"/>
<dbReference type="BioGRID" id="231155">
    <property type="interactions" value="11"/>
</dbReference>
<dbReference type="CORUM" id="Q8BIA4"/>
<dbReference type="FunCoup" id="Q8BIA4">
    <property type="interactions" value="1726"/>
</dbReference>
<dbReference type="STRING" id="10090.ENSMUSP00000047012"/>
<dbReference type="iPTMnet" id="Q8BIA4"/>
<dbReference type="PhosphoSitePlus" id="Q8BIA4"/>
<dbReference type="jPOST" id="Q8BIA4"/>
<dbReference type="PaxDb" id="10090-ENSMUSP00000047012"/>
<dbReference type="PeptideAtlas" id="Q8BIA4"/>
<dbReference type="ProteomicsDB" id="267722">
    <molecule id="Q8BIA4-1"/>
</dbReference>
<dbReference type="ProteomicsDB" id="267723">
    <molecule id="Q8BIA4-4"/>
</dbReference>
<dbReference type="Pumba" id="Q8BIA4"/>
<dbReference type="Antibodypedia" id="31322">
    <property type="antibodies" value="146 antibodies from 21 providers"/>
</dbReference>
<dbReference type="DNASU" id="231672"/>
<dbReference type="Ensembl" id="ENSMUST00000049474.9">
    <molecule id="Q8BIA4-1"/>
    <property type="protein sequence ID" value="ENSMUSP00000047012.8"/>
    <property type="gene ID" value="ENSMUSG00000032867.9"/>
</dbReference>
<dbReference type="GeneID" id="231672"/>
<dbReference type="KEGG" id="mmu:231672"/>
<dbReference type="UCSC" id="uc008zge.1">
    <molecule id="Q8BIA4-1"/>
    <property type="organism name" value="mouse"/>
</dbReference>
<dbReference type="AGR" id="MGI:1923041"/>
<dbReference type="CTD" id="26259"/>
<dbReference type="MGI" id="MGI:1923041">
    <property type="gene designation" value="Fbxw8"/>
</dbReference>
<dbReference type="VEuPathDB" id="HostDB:ENSMUSG00000032867"/>
<dbReference type="eggNOG" id="KOG0274">
    <property type="taxonomic scope" value="Eukaryota"/>
</dbReference>
<dbReference type="GeneTree" id="ENSGT00390000017221"/>
<dbReference type="HOGENOM" id="CLU_024087_1_0_1"/>
<dbReference type="InParanoid" id="Q8BIA4"/>
<dbReference type="OMA" id="LVFQECR"/>
<dbReference type="OrthoDB" id="190105at2759"/>
<dbReference type="PhylomeDB" id="Q8BIA4"/>
<dbReference type="TreeFam" id="TF332593"/>
<dbReference type="Reactome" id="R-MMU-8951664">
    <property type="pathway name" value="Neddylation"/>
</dbReference>
<dbReference type="Reactome" id="R-MMU-983168">
    <property type="pathway name" value="Antigen processing: Ubiquitination &amp; Proteasome degradation"/>
</dbReference>
<dbReference type="UniPathway" id="UPA00143"/>
<dbReference type="BioGRID-ORCS" id="231672">
    <property type="hits" value="3 hits in 79 CRISPR screens"/>
</dbReference>
<dbReference type="PRO" id="PR:Q8BIA4"/>
<dbReference type="Proteomes" id="UP000000589">
    <property type="component" value="Chromosome 5"/>
</dbReference>
<dbReference type="RNAct" id="Q8BIA4">
    <property type="molecule type" value="protein"/>
</dbReference>
<dbReference type="Bgee" id="ENSMUSG00000032867">
    <property type="expression patterns" value="Expressed in ear vesicle and 252 other cell types or tissues"/>
</dbReference>
<dbReference type="GO" id="GO:1990393">
    <property type="term" value="C:3M complex"/>
    <property type="evidence" value="ECO:0007669"/>
    <property type="project" value="Ensembl"/>
</dbReference>
<dbReference type="GO" id="GO:0031467">
    <property type="term" value="C:Cul7-RING ubiquitin ligase complex"/>
    <property type="evidence" value="ECO:0000314"/>
    <property type="project" value="UniProtKB"/>
</dbReference>
<dbReference type="GO" id="GO:0005829">
    <property type="term" value="C:cytosol"/>
    <property type="evidence" value="ECO:0000314"/>
    <property type="project" value="UniProtKB"/>
</dbReference>
<dbReference type="GO" id="GO:0005794">
    <property type="term" value="C:Golgi apparatus"/>
    <property type="evidence" value="ECO:0000250"/>
    <property type="project" value="UniProtKB"/>
</dbReference>
<dbReference type="GO" id="GO:0048471">
    <property type="term" value="C:perinuclear region of cytoplasm"/>
    <property type="evidence" value="ECO:0000250"/>
    <property type="project" value="UniProtKB"/>
</dbReference>
<dbReference type="GO" id="GO:0019005">
    <property type="term" value="C:SCF ubiquitin ligase complex"/>
    <property type="evidence" value="ECO:0000353"/>
    <property type="project" value="MGI"/>
</dbReference>
<dbReference type="GO" id="GO:0061630">
    <property type="term" value="F:ubiquitin protein ligase activity"/>
    <property type="evidence" value="ECO:0000305"/>
    <property type="project" value="GO_Central"/>
</dbReference>
<dbReference type="GO" id="GO:1990756">
    <property type="term" value="F:ubiquitin-like ligase-substrate adaptor activity"/>
    <property type="evidence" value="ECO:0000314"/>
    <property type="project" value="UniProtKB"/>
</dbReference>
<dbReference type="GO" id="GO:0008283">
    <property type="term" value="P:cell population proliferation"/>
    <property type="evidence" value="ECO:0000250"/>
    <property type="project" value="UniProtKB"/>
</dbReference>
<dbReference type="GO" id="GO:0007030">
    <property type="term" value="P:Golgi organization"/>
    <property type="evidence" value="ECO:0000250"/>
    <property type="project" value="UniProtKB"/>
</dbReference>
<dbReference type="GO" id="GO:0060716">
    <property type="term" value="P:labyrinthine layer blood vessel development"/>
    <property type="evidence" value="ECO:0000315"/>
    <property type="project" value="MGI"/>
</dbReference>
<dbReference type="GO" id="GO:0046627">
    <property type="term" value="P:negative regulation of insulin receptor signaling pathway"/>
    <property type="evidence" value="ECO:0007669"/>
    <property type="project" value="Ensembl"/>
</dbReference>
<dbReference type="GO" id="GO:0050775">
    <property type="term" value="P:positive regulation of dendrite morphogenesis"/>
    <property type="evidence" value="ECO:0000250"/>
    <property type="project" value="UniProtKB"/>
</dbReference>
<dbReference type="GO" id="GO:0032436">
    <property type="term" value="P:positive regulation of proteasomal ubiquitin-dependent protein catabolic process"/>
    <property type="evidence" value="ECO:0000314"/>
    <property type="project" value="UniProtKB"/>
</dbReference>
<dbReference type="GO" id="GO:0043161">
    <property type="term" value="P:proteasome-mediated ubiquitin-dependent protein catabolic process"/>
    <property type="evidence" value="ECO:0000250"/>
    <property type="project" value="UniProtKB"/>
</dbReference>
<dbReference type="GO" id="GO:0016567">
    <property type="term" value="P:protein ubiquitination"/>
    <property type="evidence" value="ECO:0000314"/>
    <property type="project" value="UniProtKB"/>
</dbReference>
<dbReference type="GO" id="GO:0060712">
    <property type="term" value="P:spongiotrophoblast layer development"/>
    <property type="evidence" value="ECO:0000315"/>
    <property type="project" value="MGI"/>
</dbReference>
<dbReference type="GO" id="GO:0006511">
    <property type="term" value="P:ubiquitin-dependent protein catabolic process"/>
    <property type="evidence" value="ECO:0000314"/>
    <property type="project" value="UniProtKB"/>
</dbReference>
<dbReference type="CDD" id="cd22134">
    <property type="entry name" value="F-box_FBXW8"/>
    <property type="match status" value="1"/>
</dbReference>
<dbReference type="FunFam" id="1.20.1280.50:FF:000025">
    <property type="entry name" value="F-box and WD repeat domain containing 8"/>
    <property type="match status" value="1"/>
</dbReference>
<dbReference type="FunFam" id="2.130.10.10:FF:000308">
    <property type="entry name" value="F-box and WD repeat domain containing 8"/>
    <property type="match status" value="1"/>
</dbReference>
<dbReference type="FunFam" id="2.130.10.10:FF:000428">
    <property type="entry name" value="F-box and WD repeat domain containing 8"/>
    <property type="match status" value="1"/>
</dbReference>
<dbReference type="Gene3D" id="1.20.1280.50">
    <property type="match status" value="1"/>
</dbReference>
<dbReference type="Gene3D" id="2.130.10.10">
    <property type="entry name" value="YVTN repeat-like/Quinoprotein amine dehydrogenase"/>
    <property type="match status" value="2"/>
</dbReference>
<dbReference type="InterPro" id="IPR036047">
    <property type="entry name" value="F-box-like_dom_sf"/>
</dbReference>
<dbReference type="InterPro" id="IPR001810">
    <property type="entry name" value="F-box_dom"/>
</dbReference>
<dbReference type="InterPro" id="IPR015943">
    <property type="entry name" value="WD40/YVTN_repeat-like_dom_sf"/>
</dbReference>
<dbReference type="InterPro" id="IPR036322">
    <property type="entry name" value="WD40_repeat_dom_sf"/>
</dbReference>
<dbReference type="InterPro" id="IPR001680">
    <property type="entry name" value="WD40_rpt"/>
</dbReference>
<dbReference type="InterPro" id="IPR050505">
    <property type="entry name" value="WDR55_POC1"/>
</dbReference>
<dbReference type="PANTHER" id="PTHR44019:SF8">
    <property type="entry name" value="POC1 CENTRIOLAR PROTEIN HOMOLOG"/>
    <property type="match status" value="1"/>
</dbReference>
<dbReference type="PANTHER" id="PTHR44019">
    <property type="entry name" value="WD REPEAT-CONTAINING PROTEIN 55"/>
    <property type="match status" value="1"/>
</dbReference>
<dbReference type="Pfam" id="PF12937">
    <property type="entry name" value="F-box-like"/>
    <property type="match status" value="1"/>
</dbReference>
<dbReference type="SMART" id="SM00256">
    <property type="entry name" value="FBOX"/>
    <property type="match status" value="1"/>
</dbReference>
<dbReference type="SMART" id="SM00320">
    <property type="entry name" value="WD40"/>
    <property type="match status" value="5"/>
</dbReference>
<dbReference type="SUPFAM" id="SSF81383">
    <property type="entry name" value="F-box domain"/>
    <property type="match status" value="1"/>
</dbReference>
<dbReference type="SUPFAM" id="SSF50978">
    <property type="entry name" value="WD40 repeat-like"/>
    <property type="match status" value="1"/>
</dbReference>
<dbReference type="PROSITE" id="PS50181">
    <property type="entry name" value="FBOX"/>
    <property type="match status" value="1"/>
</dbReference>
<dbReference type="PROSITE" id="PS00678">
    <property type="entry name" value="WD_REPEATS_1"/>
    <property type="match status" value="1"/>
</dbReference>
<dbReference type="PROSITE" id="PS50082">
    <property type="entry name" value="WD_REPEATS_2"/>
    <property type="match status" value="1"/>
</dbReference>
<dbReference type="PROSITE" id="PS50294">
    <property type="entry name" value="WD_REPEATS_REGION"/>
    <property type="match status" value="2"/>
</dbReference>
<proteinExistence type="evidence at protein level"/>
<name>FBXW8_MOUSE</name>
<evidence type="ECO:0000250" key="1">
    <source>
        <dbReference type="UniProtKB" id="P0DL28"/>
    </source>
</evidence>
<evidence type="ECO:0000250" key="2">
    <source>
        <dbReference type="UniProtKB" id="Q8N3Y1"/>
    </source>
</evidence>
<evidence type="ECO:0000255" key="3">
    <source>
        <dbReference type="PROSITE-ProRule" id="PRU00080"/>
    </source>
</evidence>
<evidence type="ECO:0000256" key="4">
    <source>
        <dbReference type="SAM" id="MobiDB-lite"/>
    </source>
</evidence>
<evidence type="ECO:0000269" key="5">
    <source>
    </source>
</evidence>
<evidence type="ECO:0000269" key="6">
    <source>
    </source>
</evidence>
<evidence type="ECO:0000269" key="7">
    <source>
    </source>
</evidence>
<evidence type="ECO:0000269" key="8">
    <source>
    </source>
</evidence>
<evidence type="ECO:0000269" key="9">
    <source>
    </source>
</evidence>
<evidence type="ECO:0000303" key="10">
    <source>
    </source>
</evidence>
<evidence type="ECO:0000305" key="11"/>
<evidence type="ECO:0007744" key="12">
    <source>
    </source>
</evidence>
<reference key="1">
    <citation type="journal article" date="2005" name="Science">
        <title>The transcriptional landscape of the mammalian genome.</title>
        <authorList>
            <person name="Carninci P."/>
            <person name="Kasukawa T."/>
            <person name="Katayama S."/>
            <person name="Gough J."/>
            <person name="Frith M.C."/>
            <person name="Maeda N."/>
            <person name="Oyama R."/>
            <person name="Ravasi T."/>
            <person name="Lenhard B."/>
            <person name="Wells C."/>
            <person name="Kodzius R."/>
            <person name="Shimokawa K."/>
            <person name="Bajic V.B."/>
            <person name="Brenner S.E."/>
            <person name="Batalov S."/>
            <person name="Forrest A.R."/>
            <person name="Zavolan M."/>
            <person name="Davis M.J."/>
            <person name="Wilming L.G."/>
            <person name="Aidinis V."/>
            <person name="Allen J.E."/>
            <person name="Ambesi-Impiombato A."/>
            <person name="Apweiler R."/>
            <person name="Aturaliya R.N."/>
            <person name="Bailey T.L."/>
            <person name="Bansal M."/>
            <person name="Baxter L."/>
            <person name="Beisel K.W."/>
            <person name="Bersano T."/>
            <person name="Bono H."/>
            <person name="Chalk A.M."/>
            <person name="Chiu K.P."/>
            <person name="Choudhary V."/>
            <person name="Christoffels A."/>
            <person name="Clutterbuck D.R."/>
            <person name="Crowe M.L."/>
            <person name="Dalla E."/>
            <person name="Dalrymple B.P."/>
            <person name="de Bono B."/>
            <person name="Della Gatta G."/>
            <person name="di Bernardo D."/>
            <person name="Down T."/>
            <person name="Engstrom P."/>
            <person name="Fagiolini M."/>
            <person name="Faulkner G."/>
            <person name="Fletcher C.F."/>
            <person name="Fukushima T."/>
            <person name="Furuno M."/>
            <person name="Futaki S."/>
            <person name="Gariboldi M."/>
            <person name="Georgii-Hemming P."/>
            <person name="Gingeras T.R."/>
            <person name="Gojobori T."/>
            <person name="Green R.E."/>
            <person name="Gustincich S."/>
            <person name="Harbers M."/>
            <person name="Hayashi Y."/>
            <person name="Hensch T.K."/>
            <person name="Hirokawa N."/>
            <person name="Hill D."/>
            <person name="Huminiecki L."/>
            <person name="Iacono M."/>
            <person name="Ikeo K."/>
            <person name="Iwama A."/>
            <person name="Ishikawa T."/>
            <person name="Jakt M."/>
            <person name="Kanapin A."/>
            <person name="Katoh M."/>
            <person name="Kawasawa Y."/>
            <person name="Kelso J."/>
            <person name="Kitamura H."/>
            <person name="Kitano H."/>
            <person name="Kollias G."/>
            <person name="Krishnan S.P."/>
            <person name="Kruger A."/>
            <person name="Kummerfeld S.K."/>
            <person name="Kurochkin I.V."/>
            <person name="Lareau L.F."/>
            <person name="Lazarevic D."/>
            <person name="Lipovich L."/>
            <person name="Liu J."/>
            <person name="Liuni S."/>
            <person name="McWilliam S."/>
            <person name="Madan Babu M."/>
            <person name="Madera M."/>
            <person name="Marchionni L."/>
            <person name="Matsuda H."/>
            <person name="Matsuzawa S."/>
            <person name="Miki H."/>
            <person name="Mignone F."/>
            <person name="Miyake S."/>
            <person name="Morris K."/>
            <person name="Mottagui-Tabar S."/>
            <person name="Mulder N."/>
            <person name="Nakano N."/>
            <person name="Nakauchi H."/>
            <person name="Ng P."/>
            <person name="Nilsson R."/>
            <person name="Nishiguchi S."/>
            <person name="Nishikawa S."/>
            <person name="Nori F."/>
            <person name="Ohara O."/>
            <person name="Okazaki Y."/>
            <person name="Orlando V."/>
            <person name="Pang K.C."/>
            <person name="Pavan W.J."/>
            <person name="Pavesi G."/>
            <person name="Pesole G."/>
            <person name="Petrovsky N."/>
            <person name="Piazza S."/>
            <person name="Reed J."/>
            <person name="Reid J.F."/>
            <person name="Ring B.Z."/>
            <person name="Ringwald M."/>
            <person name="Rost B."/>
            <person name="Ruan Y."/>
            <person name="Salzberg S.L."/>
            <person name="Sandelin A."/>
            <person name="Schneider C."/>
            <person name="Schoenbach C."/>
            <person name="Sekiguchi K."/>
            <person name="Semple C.A."/>
            <person name="Seno S."/>
            <person name="Sessa L."/>
            <person name="Sheng Y."/>
            <person name="Shibata Y."/>
            <person name="Shimada H."/>
            <person name="Shimada K."/>
            <person name="Silva D."/>
            <person name="Sinclair B."/>
            <person name="Sperling S."/>
            <person name="Stupka E."/>
            <person name="Sugiura K."/>
            <person name="Sultana R."/>
            <person name="Takenaka Y."/>
            <person name="Taki K."/>
            <person name="Tammoja K."/>
            <person name="Tan S.L."/>
            <person name="Tang S."/>
            <person name="Taylor M.S."/>
            <person name="Tegner J."/>
            <person name="Teichmann S.A."/>
            <person name="Ueda H.R."/>
            <person name="van Nimwegen E."/>
            <person name="Verardo R."/>
            <person name="Wei C.L."/>
            <person name="Yagi K."/>
            <person name="Yamanishi H."/>
            <person name="Zabarovsky E."/>
            <person name="Zhu S."/>
            <person name="Zimmer A."/>
            <person name="Hide W."/>
            <person name="Bult C."/>
            <person name="Grimmond S.M."/>
            <person name="Teasdale R.D."/>
            <person name="Liu E.T."/>
            <person name="Brusic V."/>
            <person name="Quackenbush J."/>
            <person name="Wahlestedt C."/>
            <person name="Mattick J.S."/>
            <person name="Hume D.A."/>
            <person name="Kai C."/>
            <person name="Sasaki D."/>
            <person name="Tomaru Y."/>
            <person name="Fukuda S."/>
            <person name="Kanamori-Katayama M."/>
            <person name="Suzuki M."/>
            <person name="Aoki J."/>
            <person name="Arakawa T."/>
            <person name="Iida J."/>
            <person name="Imamura K."/>
            <person name="Itoh M."/>
            <person name="Kato T."/>
            <person name="Kawaji H."/>
            <person name="Kawagashira N."/>
            <person name="Kawashima T."/>
            <person name="Kojima M."/>
            <person name="Kondo S."/>
            <person name="Konno H."/>
            <person name="Nakano K."/>
            <person name="Ninomiya N."/>
            <person name="Nishio T."/>
            <person name="Okada M."/>
            <person name="Plessy C."/>
            <person name="Shibata K."/>
            <person name="Shiraki T."/>
            <person name="Suzuki S."/>
            <person name="Tagami M."/>
            <person name="Waki K."/>
            <person name="Watahiki A."/>
            <person name="Okamura-Oho Y."/>
            <person name="Suzuki H."/>
            <person name="Kawai J."/>
            <person name="Hayashizaki Y."/>
        </authorList>
    </citation>
    <scope>NUCLEOTIDE SEQUENCE [LARGE SCALE MRNA] (ISOFORMS 1 AND 2)</scope>
    <source>
        <strain>C57BL/6J</strain>
        <tissue>Corpus striatum</tissue>
        <tissue>Diencephalon</tissue>
        <tissue>Eye</tissue>
    </source>
</reference>
<reference key="2">
    <citation type="journal article" date="2004" name="Genome Res.">
        <title>The status, quality, and expansion of the NIH full-length cDNA project: the Mammalian Gene Collection (MGC).</title>
        <authorList>
            <consortium name="The MGC Project Team"/>
        </authorList>
    </citation>
    <scope>NUCLEOTIDE SEQUENCE [LARGE SCALE MRNA] (ISOFORM 1)</scope>
    <source>
        <strain>FVB/N</strain>
        <tissue>Liver</tissue>
        <tissue>Mammary gland</tissue>
    </source>
</reference>
<reference key="3">
    <citation type="journal article" date="2006" name="Mol. Cell. Biol.">
        <title>Fbxw8 is essential for Cul1-Cul7 complex formation and for placental development.</title>
        <authorList>
            <person name="Tsunematsu R."/>
            <person name="Nishiyama M."/>
            <person name="Kotoshiba S."/>
            <person name="Saiga T."/>
            <person name="Kamura T."/>
            <person name="Nakayama K.I."/>
        </authorList>
    </citation>
    <scope>INTERACTION WITH CUL7</scope>
    <scope>DISRUPTION PHENOTYPE</scope>
</reference>
<reference key="4">
    <citation type="journal article" date="2007" name="Proc. Natl. Acad. Sci. U.S.A.">
        <title>Large-scale phosphorylation analysis of mouse liver.</title>
        <authorList>
            <person name="Villen J."/>
            <person name="Beausoleil S.A."/>
            <person name="Gerber S.A."/>
            <person name="Gygi S.P."/>
        </authorList>
    </citation>
    <scope>IDENTIFICATION BY MASS SPECTROMETRY [LARGE SCALE ANALYSIS]</scope>
    <source>
        <tissue>Liver</tissue>
    </source>
</reference>
<reference key="5">
    <citation type="journal article" date="2008" name="Mol. Cell. Biol.">
        <title>Disruption of the Fbxw8 gene results in pre- and postnatal growth retardation in mice.</title>
        <authorList>
            <person name="Tsutsumi T."/>
            <person name="Kuwabara H."/>
            <person name="Arai T."/>
            <person name="Xiao Y."/>
            <person name="Decaprio J.A."/>
        </authorList>
    </citation>
    <scope>DISRUPTION PHENOTYPE</scope>
    <scope>TISSUE SPECIFICITY</scope>
</reference>
<reference key="6">
    <citation type="journal article" date="2010" name="Cell">
        <title>A tissue-specific atlas of mouse protein phosphorylation and expression.</title>
        <authorList>
            <person name="Huttlin E.L."/>
            <person name="Jedrychowski M.P."/>
            <person name="Elias J.E."/>
            <person name="Goswami T."/>
            <person name="Rad R."/>
            <person name="Beausoleil S.A."/>
            <person name="Villen J."/>
            <person name="Haas W."/>
            <person name="Sowa M.E."/>
            <person name="Gygi S.P."/>
        </authorList>
    </citation>
    <scope>PHOSPHORYLATION [LARGE SCALE ANALYSIS] AT SER-84 AND SER-86</scope>
    <scope>IDENTIFICATION BY MASS SPECTROMETRY [LARGE SCALE ANALYSIS]</scope>
    <source>
        <tissue>Lung</tissue>
        <tissue>Spleen</tissue>
        <tissue>Testis</tissue>
    </source>
</reference>
<reference key="7">
    <citation type="journal article" date="2017" name="Stem Cell Reports">
        <title>Serine 347 Phosphorylation by JNKs Negatively Regulates OCT4 Protein Stability in Mouse Embryonic Stem Cells.</title>
        <authorList>
            <person name="Bae K.B."/>
            <person name="Yu D.H."/>
            <person name="Lee K.Y."/>
            <person name="Yao K."/>
            <person name="Ryu J."/>
            <person name="Lim D.Y."/>
            <person name="Zykova T.A."/>
            <person name="Kim M.O."/>
            <person name="Bode A.M."/>
            <person name="Dong Z."/>
        </authorList>
    </citation>
    <scope>INTERACTION WITH POUF51</scope>
</reference>
<reference key="8">
    <citation type="journal article" date="2012" name="Mol. Cell">
        <title>mTOR complex 2 regulates proper turnover of insulin receptor substrate-1 via the ubiquitin ligase subunit Fbw8.</title>
        <authorList>
            <person name="Kim S.J."/>
            <person name="DeStefano M.A."/>
            <person name="Oh W.J."/>
            <person name="Wu C.C."/>
            <person name="Vega-Cotto N.M."/>
            <person name="Finlan M."/>
            <person name="Liu D."/>
            <person name="Su B."/>
            <person name="Jacinto E."/>
        </authorList>
    </citation>
    <scope>FUNCTION</scope>
    <scope>PATHWAY</scope>
    <scope>SUBCELLULAR LOCATION</scope>
    <scope>PHOSPHORYLATION AT SER-86</scope>
    <scope>MUTAGENESIS OF SER-86</scope>
</reference>
<reference key="9">
    <citation type="journal article" date="2012" name="Mol. Cell. Biol.">
        <title>Genetic reevaluation of the role of F-box proteins in cyclin D1 degradation.</title>
        <authorList>
            <person name="Kanie T."/>
            <person name="Onoyama I."/>
            <person name="Matsumoto A."/>
            <person name="Yamada M."/>
            <person name="Nakatsumi H."/>
            <person name="Tateishi Y."/>
            <person name="Yamamura S."/>
            <person name="Tsunematsu R."/>
            <person name="Matsumoto M."/>
            <person name="Nakayama K.I."/>
        </authorList>
    </citation>
    <scope>FUNCTION</scope>
</reference>
<feature type="chain" id="PRO_0000050998" description="F-box/WD repeat-containing protein 8">
    <location>
        <begin position="1"/>
        <end position="598"/>
    </location>
</feature>
<feature type="domain" description="F-box" evidence="3">
    <location>
        <begin position="113"/>
        <end position="159"/>
    </location>
</feature>
<feature type="repeat" description="WD 1" evidence="2">
    <location>
        <begin position="201"/>
        <end position="250"/>
    </location>
</feature>
<feature type="repeat" description="WD 2" evidence="2">
    <location>
        <begin position="259"/>
        <end position="299"/>
    </location>
</feature>
<feature type="repeat" description="WD 3" evidence="2">
    <location>
        <begin position="300"/>
        <end position="340"/>
    </location>
</feature>
<feature type="repeat" description="WD 4" evidence="2">
    <location>
        <begin position="341"/>
        <end position="383"/>
    </location>
</feature>
<feature type="repeat" description="WD 5" evidence="2">
    <location>
        <begin position="384"/>
        <end position="429"/>
    </location>
</feature>
<feature type="repeat" description="WD 6" evidence="2">
    <location>
        <begin position="430"/>
        <end position="475"/>
    </location>
</feature>
<feature type="repeat" description="WD 7" evidence="2">
    <location>
        <begin position="476"/>
        <end position="513"/>
    </location>
</feature>
<feature type="repeat" description="WD 8" evidence="2">
    <location>
        <begin position="514"/>
        <end position="561"/>
    </location>
</feature>
<feature type="region of interest" description="Disordered" evidence="4">
    <location>
        <begin position="20"/>
        <end position="97"/>
    </location>
</feature>
<feature type="compositionally biased region" description="Basic and acidic residues" evidence="4">
    <location>
        <begin position="29"/>
        <end position="44"/>
    </location>
</feature>
<feature type="compositionally biased region" description="Low complexity" evidence="4">
    <location>
        <begin position="51"/>
        <end position="65"/>
    </location>
</feature>
<feature type="compositionally biased region" description="Basic and acidic residues" evidence="4">
    <location>
        <begin position="73"/>
        <end position="93"/>
    </location>
</feature>
<feature type="modified residue" description="N-acetylmethionine" evidence="2">
    <location>
        <position position="1"/>
    </location>
</feature>
<feature type="modified residue" description="Phosphoserine" evidence="12">
    <location>
        <position position="84"/>
    </location>
</feature>
<feature type="modified residue" description="Phosphoserine; by MTOR" evidence="8 12">
    <location>
        <position position="86"/>
    </location>
</feature>
<feature type="splice variant" id="VSP_008502" description="In isoform 2." evidence="10">
    <location>
        <begin position="457"/>
        <end position="598"/>
    </location>
</feature>
<feature type="mutagenesis site" description="Abolished phosphorylation by mTORC2, leading to increased protein turnover." evidence="8">
    <original>S</original>
    <variation>A</variation>
    <location>
        <position position="86"/>
    </location>
</feature>
<feature type="sequence conflict" description="In Ref. 1; BAC28712." evidence="11" ref="1">
    <original>P</original>
    <variation>T</variation>
    <location>
        <position position="67"/>
    </location>
</feature>
<feature type="sequence conflict" description="In Ref. 2; AAH09095." evidence="11" ref="2">
    <original>F</original>
    <variation>S</variation>
    <location>
        <position position="171"/>
    </location>
</feature>
<feature type="sequence conflict" description="In Ref. 1; BAC33128." evidence="11" ref="1">
    <original>LE</original>
    <variation>WS</variation>
    <location>
        <begin position="247"/>
        <end position="248"/>
    </location>
</feature>
<feature type="sequence conflict" description="In Ref. 1; BAC35527." evidence="11" ref="1">
    <original>I</original>
    <variation>V</variation>
    <location>
        <position position="280"/>
    </location>
</feature>